<comment type="function">
    <text evidence="1">NDH-1 shuttles electrons from NADH, via FMN and iron-sulfur (Fe-S) centers, to quinones in the respiratory chain. The immediate electron acceptor for the enzyme in this species is believed to be ubiquinone. Couples the redox reaction to proton translocation (for every two electrons transferred, four hydrogen ions are translocated across the cytoplasmic membrane), and thus conserves the redox energy in a proton gradient.</text>
</comment>
<comment type="catalytic activity">
    <reaction evidence="1">
        <text>a quinone + NADH + 5 H(+)(in) = a quinol + NAD(+) + 4 H(+)(out)</text>
        <dbReference type="Rhea" id="RHEA:57888"/>
        <dbReference type="ChEBI" id="CHEBI:15378"/>
        <dbReference type="ChEBI" id="CHEBI:24646"/>
        <dbReference type="ChEBI" id="CHEBI:57540"/>
        <dbReference type="ChEBI" id="CHEBI:57945"/>
        <dbReference type="ChEBI" id="CHEBI:132124"/>
    </reaction>
</comment>
<comment type="subunit">
    <text evidence="1">NDH-1 is composed of 13 different subunits. Subunits NuoA, H, J, K, L, M, N constitute the membrane sector of the complex.</text>
</comment>
<comment type="subcellular location">
    <subcellularLocation>
        <location evidence="1">Cell inner membrane</location>
        <topology evidence="1">Multi-pass membrane protein</topology>
    </subcellularLocation>
</comment>
<comment type="similarity">
    <text evidence="1">Belongs to the complex I subunit 4L family.</text>
</comment>
<protein>
    <recommendedName>
        <fullName evidence="1">NADH-quinone oxidoreductase subunit K</fullName>
        <ecNumber evidence="1">7.1.1.-</ecNumber>
    </recommendedName>
    <alternativeName>
        <fullName evidence="1">NADH dehydrogenase I subunit K</fullName>
    </alternativeName>
    <alternativeName>
        <fullName evidence="1">NDH-1 subunit K</fullName>
    </alternativeName>
</protein>
<name>NUOK_SALTY</name>
<feature type="chain" id="PRO_0000390232" description="NADH-quinone oxidoreductase subunit K">
    <location>
        <begin position="1"/>
        <end position="100"/>
    </location>
</feature>
<feature type="transmembrane region" description="Helical" evidence="1">
    <location>
        <begin position="4"/>
        <end position="24"/>
    </location>
</feature>
<feature type="transmembrane region" description="Helical" evidence="1">
    <location>
        <begin position="28"/>
        <end position="48"/>
    </location>
</feature>
<feature type="transmembrane region" description="Helical" evidence="1">
    <location>
        <begin position="60"/>
        <end position="80"/>
    </location>
</feature>
<evidence type="ECO:0000255" key="1">
    <source>
        <dbReference type="HAMAP-Rule" id="MF_01456"/>
    </source>
</evidence>
<keyword id="KW-0997">Cell inner membrane</keyword>
<keyword id="KW-1003">Cell membrane</keyword>
<keyword id="KW-0472">Membrane</keyword>
<keyword id="KW-0520">NAD</keyword>
<keyword id="KW-0874">Quinone</keyword>
<keyword id="KW-1185">Reference proteome</keyword>
<keyword id="KW-1278">Translocase</keyword>
<keyword id="KW-0812">Transmembrane</keyword>
<keyword id="KW-1133">Transmembrane helix</keyword>
<keyword id="KW-0813">Transport</keyword>
<keyword id="KW-0830">Ubiquinone</keyword>
<reference key="1">
    <citation type="journal article" date="2001" name="Nature">
        <title>Complete genome sequence of Salmonella enterica serovar Typhimurium LT2.</title>
        <authorList>
            <person name="McClelland M."/>
            <person name="Sanderson K.E."/>
            <person name="Spieth J."/>
            <person name="Clifton S.W."/>
            <person name="Latreille P."/>
            <person name="Courtney L."/>
            <person name="Porwollik S."/>
            <person name="Ali J."/>
            <person name="Dante M."/>
            <person name="Du F."/>
            <person name="Hou S."/>
            <person name="Layman D."/>
            <person name="Leonard S."/>
            <person name="Nguyen C."/>
            <person name="Scott K."/>
            <person name="Holmes A."/>
            <person name="Grewal N."/>
            <person name="Mulvaney E."/>
            <person name="Ryan E."/>
            <person name="Sun H."/>
            <person name="Florea L."/>
            <person name="Miller W."/>
            <person name="Stoneking T."/>
            <person name="Nhan M."/>
            <person name="Waterston R."/>
            <person name="Wilson R.K."/>
        </authorList>
    </citation>
    <scope>NUCLEOTIDE SEQUENCE [LARGE SCALE GENOMIC DNA]</scope>
    <source>
        <strain>LT2 / SGSC1412 / ATCC 700720</strain>
    </source>
</reference>
<sequence>MIPLTHGLILAAILFVLGLTGLVIRRNLLFMLIGLEIMINASALAFVVAGSYWGQTDGQVMYILAISLAAAEASIGLALLLQLHRRRQNLNIDSVSEMRG</sequence>
<gene>
    <name evidence="1" type="primary">nuoK</name>
    <name type="ordered locus">STM2319</name>
</gene>
<dbReference type="EC" id="7.1.1.-" evidence="1"/>
<dbReference type="EMBL" id="AE006468">
    <property type="protein sequence ID" value="AAL21220.1"/>
    <property type="molecule type" value="Genomic_DNA"/>
</dbReference>
<dbReference type="RefSeq" id="NP_461261.1">
    <property type="nucleotide sequence ID" value="NC_003197.2"/>
</dbReference>
<dbReference type="RefSeq" id="WP_000612687.1">
    <property type="nucleotide sequence ID" value="NC_003197.2"/>
</dbReference>
<dbReference type="SMR" id="Q7CQ53"/>
<dbReference type="STRING" id="99287.STM2319"/>
<dbReference type="PaxDb" id="99287-STM2319"/>
<dbReference type="GeneID" id="1253841"/>
<dbReference type="KEGG" id="stm:STM2319"/>
<dbReference type="PATRIC" id="fig|99287.12.peg.2456"/>
<dbReference type="HOGENOM" id="CLU_144724_0_1_6"/>
<dbReference type="OMA" id="IPMEHGL"/>
<dbReference type="PhylomeDB" id="Q7CQ53"/>
<dbReference type="BioCyc" id="SENT99287:STM2319-MONOMER"/>
<dbReference type="Proteomes" id="UP000001014">
    <property type="component" value="Chromosome"/>
</dbReference>
<dbReference type="GO" id="GO:0030964">
    <property type="term" value="C:NADH dehydrogenase complex"/>
    <property type="evidence" value="ECO:0000318"/>
    <property type="project" value="GO_Central"/>
</dbReference>
<dbReference type="GO" id="GO:0005886">
    <property type="term" value="C:plasma membrane"/>
    <property type="evidence" value="ECO:0007669"/>
    <property type="project" value="UniProtKB-SubCell"/>
</dbReference>
<dbReference type="GO" id="GO:0050136">
    <property type="term" value="F:NADH:ubiquinone reductase (non-electrogenic) activity"/>
    <property type="evidence" value="ECO:0007669"/>
    <property type="project" value="UniProtKB-UniRule"/>
</dbReference>
<dbReference type="GO" id="GO:0048038">
    <property type="term" value="F:quinone binding"/>
    <property type="evidence" value="ECO:0007669"/>
    <property type="project" value="UniProtKB-KW"/>
</dbReference>
<dbReference type="GO" id="GO:0042773">
    <property type="term" value="P:ATP synthesis coupled electron transport"/>
    <property type="evidence" value="ECO:0007669"/>
    <property type="project" value="InterPro"/>
</dbReference>
<dbReference type="FunFam" id="1.10.287.3510:FF:000001">
    <property type="entry name" value="NADH-quinone oxidoreductase subunit K"/>
    <property type="match status" value="1"/>
</dbReference>
<dbReference type="Gene3D" id="1.10.287.3510">
    <property type="match status" value="1"/>
</dbReference>
<dbReference type="HAMAP" id="MF_01456">
    <property type="entry name" value="NDH1_NuoK"/>
    <property type="match status" value="1"/>
</dbReference>
<dbReference type="InterPro" id="IPR001133">
    <property type="entry name" value="NADH_UbQ_OxRdtase_chain4L/K"/>
</dbReference>
<dbReference type="InterPro" id="IPR039428">
    <property type="entry name" value="NUOK/Mnh_C1-like"/>
</dbReference>
<dbReference type="NCBIfam" id="NF004319">
    <property type="entry name" value="PRK05715.1-1"/>
    <property type="match status" value="1"/>
</dbReference>
<dbReference type="NCBIfam" id="NF004320">
    <property type="entry name" value="PRK05715.1-2"/>
    <property type="match status" value="1"/>
</dbReference>
<dbReference type="PANTHER" id="PTHR11434:SF16">
    <property type="entry name" value="NADH-UBIQUINONE OXIDOREDUCTASE CHAIN 4L"/>
    <property type="match status" value="1"/>
</dbReference>
<dbReference type="PANTHER" id="PTHR11434">
    <property type="entry name" value="NADH-UBIQUINONE OXIDOREDUCTASE SUBUNIT ND4L"/>
    <property type="match status" value="1"/>
</dbReference>
<dbReference type="Pfam" id="PF00420">
    <property type="entry name" value="Oxidored_q2"/>
    <property type="match status" value="1"/>
</dbReference>
<organism>
    <name type="scientific">Salmonella typhimurium (strain LT2 / SGSC1412 / ATCC 700720)</name>
    <dbReference type="NCBI Taxonomy" id="99287"/>
    <lineage>
        <taxon>Bacteria</taxon>
        <taxon>Pseudomonadati</taxon>
        <taxon>Pseudomonadota</taxon>
        <taxon>Gammaproteobacteria</taxon>
        <taxon>Enterobacterales</taxon>
        <taxon>Enterobacteriaceae</taxon>
        <taxon>Salmonella</taxon>
    </lineage>
</organism>
<accession>Q7CQ53</accession>
<proteinExistence type="inferred from homology"/>